<gene>
    <name evidence="1" type="primary">hemH</name>
    <name type="ordered locus">Tgr7_0266</name>
</gene>
<proteinExistence type="inferred from homology"/>
<keyword id="KW-0963">Cytoplasm</keyword>
<keyword id="KW-0350">Heme biosynthesis</keyword>
<keyword id="KW-0408">Iron</keyword>
<keyword id="KW-0456">Lyase</keyword>
<keyword id="KW-0479">Metal-binding</keyword>
<keyword id="KW-0627">Porphyrin biosynthesis</keyword>
<keyword id="KW-1185">Reference proteome</keyword>
<organism>
    <name type="scientific">Thioalkalivibrio sulfidiphilus (strain HL-EbGR7)</name>
    <dbReference type="NCBI Taxonomy" id="396588"/>
    <lineage>
        <taxon>Bacteria</taxon>
        <taxon>Pseudomonadati</taxon>
        <taxon>Pseudomonadota</taxon>
        <taxon>Gammaproteobacteria</taxon>
        <taxon>Chromatiales</taxon>
        <taxon>Ectothiorhodospiraceae</taxon>
        <taxon>Thioalkalivibrio</taxon>
    </lineage>
</organism>
<accession>B8GU82</accession>
<dbReference type="EC" id="4.98.1.1" evidence="1"/>
<dbReference type="EMBL" id="CP001339">
    <property type="protein sequence ID" value="ACL71365.1"/>
    <property type="molecule type" value="Genomic_DNA"/>
</dbReference>
<dbReference type="RefSeq" id="WP_012636854.1">
    <property type="nucleotide sequence ID" value="NC_011901.1"/>
</dbReference>
<dbReference type="SMR" id="B8GU82"/>
<dbReference type="STRING" id="396588.Tgr7_0266"/>
<dbReference type="KEGG" id="tgr:Tgr7_0266"/>
<dbReference type="eggNOG" id="COG0276">
    <property type="taxonomic scope" value="Bacteria"/>
</dbReference>
<dbReference type="HOGENOM" id="CLU_018884_0_0_6"/>
<dbReference type="OrthoDB" id="9809741at2"/>
<dbReference type="UniPathway" id="UPA00252">
    <property type="reaction ID" value="UER00325"/>
</dbReference>
<dbReference type="Proteomes" id="UP000002383">
    <property type="component" value="Chromosome"/>
</dbReference>
<dbReference type="GO" id="GO:0005737">
    <property type="term" value="C:cytoplasm"/>
    <property type="evidence" value="ECO:0007669"/>
    <property type="project" value="UniProtKB-SubCell"/>
</dbReference>
<dbReference type="GO" id="GO:0004325">
    <property type="term" value="F:ferrochelatase activity"/>
    <property type="evidence" value="ECO:0007669"/>
    <property type="project" value="UniProtKB-UniRule"/>
</dbReference>
<dbReference type="GO" id="GO:0046872">
    <property type="term" value="F:metal ion binding"/>
    <property type="evidence" value="ECO:0007669"/>
    <property type="project" value="UniProtKB-KW"/>
</dbReference>
<dbReference type="GO" id="GO:0006783">
    <property type="term" value="P:heme biosynthetic process"/>
    <property type="evidence" value="ECO:0007669"/>
    <property type="project" value="UniProtKB-UniRule"/>
</dbReference>
<dbReference type="CDD" id="cd00419">
    <property type="entry name" value="Ferrochelatase_C"/>
    <property type="match status" value="1"/>
</dbReference>
<dbReference type="CDD" id="cd03411">
    <property type="entry name" value="Ferrochelatase_N"/>
    <property type="match status" value="1"/>
</dbReference>
<dbReference type="FunFam" id="3.40.50.1400:FF:000002">
    <property type="entry name" value="Ferrochelatase"/>
    <property type="match status" value="1"/>
</dbReference>
<dbReference type="Gene3D" id="3.40.50.1400">
    <property type="match status" value="2"/>
</dbReference>
<dbReference type="HAMAP" id="MF_00323">
    <property type="entry name" value="Ferrochelatase"/>
    <property type="match status" value="1"/>
</dbReference>
<dbReference type="InterPro" id="IPR001015">
    <property type="entry name" value="Ferrochelatase"/>
</dbReference>
<dbReference type="InterPro" id="IPR019772">
    <property type="entry name" value="Ferrochelatase_AS"/>
</dbReference>
<dbReference type="InterPro" id="IPR033644">
    <property type="entry name" value="Ferrochelatase_C"/>
</dbReference>
<dbReference type="InterPro" id="IPR033659">
    <property type="entry name" value="Ferrochelatase_N"/>
</dbReference>
<dbReference type="NCBIfam" id="TIGR00109">
    <property type="entry name" value="hemH"/>
    <property type="match status" value="1"/>
</dbReference>
<dbReference type="PANTHER" id="PTHR11108">
    <property type="entry name" value="FERROCHELATASE"/>
    <property type="match status" value="1"/>
</dbReference>
<dbReference type="PANTHER" id="PTHR11108:SF1">
    <property type="entry name" value="FERROCHELATASE, MITOCHONDRIAL"/>
    <property type="match status" value="1"/>
</dbReference>
<dbReference type="Pfam" id="PF00762">
    <property type="entry name" value="Ferrochelatase"/>
    <property type="match status" value="1"/>
</dbReference>
<dbReference type="SUPFAM" id="SSF53800">
    <property type="entry name" value="Chelatase"/>
    <property type="match status" value="1"/>
</dbReference>
<dbReference type="PROSITE" id="PS00534">
    <property type="entry name" value="FERROCHELATASE"/>
    <property type="match status" value="1"/>
</dbReference>
<comment type="function">
    <text evidence="1">Catalyzes the ferrous insertion into protoporphyrin IX.</text>
</comment>
<comment type="catalytic activity">
    <reaction evidence="1">
        <text>heme b + 2 H(+) = protoporphyrin IX + Fe(2+)</text>
        <dbReference type="Rhea" id="RHEA:22584"/>
        <dbReference type="ChEBI" id="CHEBI:15378"/>
        <dbReference type="ChEBI" id="CHEBI:29033"/>
        <dbReference type="ChEBI" id="CHEBI:57306"/>
        <dbReference type="ChEBI" id="CHEBI:60344"/>
        <dbReference type="EC" id="4.98.1.1"/>
    </reaction>
</comment>
<comment type="pathway">
    <text evidence="1">Porphyrin-containing compound metabolism; protoheme biosynthesis; protoheme from protoporphyrin-IX: step 1/1.</text>
</comment>
<comment type="subcellular location">
    <subcellularLocation>
        <location evidence="1">Cytoplasm</location>
    </subcellularLocation>
</comment>
<comment type="similarity">
    <text evidence="1">Belongs to the ferrochelatase family.</text>
</comment>
<sequence length="369" mass="41351">MRFDGESDYRHGSPEILGVLVTNLGTPDAPTPKALRRYLKEFLWDPRVVEIPRAAWWLILNGIILNVRPRRSAKLYEQVWTEEGSPLLVIGRRQAEGVATRLSERLPGPVKVELAMRYGQPSIESGLMRLREAGARRILVLPLYPQYSGSTGGSTFDQVSRVLRRWRWVPGLRFVSDYHSDAGYLDALAESVRAYWDQHGRGSKLLMSFHGVPKRYLLAGDPYHCQCHATGRQLAERLGLKEGEWVVTFQSRFGKAEWLKPYTDMTVKALGEEKLGRLDVVCPGFSADCLETIEEIAGENREIFQHAGGGEFHYIPALNDNPDHLDALADLVLRNVQGWPEANPGYDATARQSAAEASRARALGMGAKD</sequence>
<name>HEMH_THISH</name>
<feature type="chain" id="PRO_1000189995" description="Ferrochelatase">
    <location>
        <begin position="1"/>
        <end position="369"/>
    </location>
</feature>
<feature type="binding site" evidence="1">
    <location>
        <position position="210"/>
    </location>
    <ligand>
        <name>Fe cation</name>
        <dbReference type="ChEBI" id="CHEBI:24875"/>
    </ligand>
</feature>
<feature type="binding site" evidence="1">
    <location>
        <position position="291"/>
    </location>
    <ligand>
        <name>Fe cation</name>
        <dbReference type="ChEBI" id="CHEBI:24875"/>
    </ligand>
</feature>
<reference key="1">
    <citation type="journal article" date="2011" name="Stand. Genomic Sci.">
        <title>Complete genome sequence of 'Thioalkalivibrio sulfidophilus' HL-EbGr7.</title>
        <authorList>
            <person name="Muyzer G."/>
            <person name="Sorokin D.Y."/>
            <person name="Mavromatis K."/>
            <person name="Lapidus A."/>
            <person name="Clum A."/>
            <person name="Ivanova N."/>
            <person name="Pati A."/>
            <person name="d'Haeseleer P."/>
            <person name="Woyke T."/>
            <person name="Kyrpides N.C."/>
        </authorList>
    </citation>
    <scope>NUCLEOTIDE SEQUENCE [LARGE SCALE GENOMIC DNA]</scope>
    <source>
        <strain>HL-EbGR7</strain>
    </source>
</reference>
<evidence type="ECO:0000255" key="1">
    <source>
        <dbReference type="HAMAP-Rule" id="MF_00323"/>
    </source>
</evidence>
<protein>
    <recommendedName>
        <fullName evidence="1">Ferrochelatase</fullName>
        <ecNumber evidence="1">4.98.1.1</ecNumber>
    </recommendedName>
    <alternativeName>
        <fullName evidence="1">Heme synthase</fullName>
    </alternativeName>
    <alternativeName>
        <fullName evidence="1">Protoheme ferro-lyase</fullName>
    </alternativeName>
</protein>